<accession>B7MXR3</accession>
<gene>
    <name evidence="1" type="primary">ubiG</name>
    <name type="ordered locus">ECED1_2698</name>
</gene>
<keyword id="KW-0489">Methyltransferase</keyword>
<keyword id="KW-0949">S-adenosyl-L-methionine</keyword>
<keyword id="KW-0808">Transferase</keyword>
<keyword id="KW-0831">Ubiquinone biosynthesis</keyword>
<name>UBIG_ECO81</name>
<dbReference type="EC" id="2.1.1.222" evidence="1"/>
<dbReference type="EC" id="2.1.1.64" evidence="1"/>
<dbReference type="EMBL" id="CU928162">
    <property type="protein sequence ID" value="CAR08879.2"/>
    <property type="molecule type" value="Genomic_DNA"/>
</dbReference>
<dbReference type="RefSeq" id="WP_000990782.1">
    <property type="nucleotide sequence ID" value="NC_011745.1"/>
</dbReference>
<dbReference type="SMR" id="B7MXR3"/>
<dbReference type="KEGG" id="ecq:ECED1_2698"/>
<dbReference type="HOGENOM" id="CLU_042432_5_0_6"/>
<dbReference type="UniPathway" id="UPA00232"/>
<dbReference type="Proteomes" id="UP000000748">
    <property type="component" value="Chromosome"/>
</dbReference>
<dbReference type="GO" id="GO:0102208">
    <property type="term" value="F:2-polyprenyl-6-hydroxyphenol methylase activity"/>
    <property type="evidence" value="ECO:0007669"/>
    <property type="project" value="UniProtKB-EC"/>
</dbReference>
<dbReference type="GO" id="GO:0061542">
    <property type="term" value="F:3-demethylubiquinol 3-O-methyltransferase activity"/>
    <property type="evidence" value="ECO:0007669"/>
    <property type="project" value="UniProtKB-UniRule"/>
</dbReference>
<dbReference type="GO" id="GO:0010420">
    <property type="term" value="F:polyprenyldihydroxybenzoate methyltransferase activity"/>
    <property type="evidence" value="ECO:0007669"/>
    <property type="project" value="InterPro"/>
</dbReference>
<dbReference type="GO" id="GO:0032259">
    <property type="term" value="P:methylation"/>
    <property type="evidence" value="ECO:0007669"/>
    <property type="project" value="UniProtKB-KW"/>
</dbReference>
<dbReference type="CDD" id="cd02440">
    <property type="entry name" value="AdoMet_MTases"/>
    <property type="match status" value="1"/>
</dbReference>
<dbReference type="FunFam" id="3.40.50.150:FF:000028">
    <property type="entry name" value="Ubiquinone biosynthesis O-methyltransferase"/>
    <property type="match status" value="1"/>
</dbReference>
<dbReference type="Gene3D" id="3.40.50.150">
    <property type="entry name" value="Vaccinia Virus protein VP39"/>
    <property type="match status" value="1"/>
</dbReference>
<dbReference type="HAMAP" id="MF_00472">
    <property type="entry name" value="UbiG"/>
    <property type="match status" value="1"/>
</dbReference>
<dbReference type="InterPro" id="IPR029063">
    <property type="entry name" value="SAM-dependent_MTases_sf"/>
</dbReference>
<dbReference type="InterPro" id="IPR010233">
    <property type="entry name" value="UbiG_MeTrfase"/>
</dbReference>
<dbReference type="NCBIfam" id="TIGR01983">
    <property type="entry name" value="UbiG"/>
    <property type="match status" value="1"/>
</dbReference>
<dbReference type="PANTHER" id="PTHR43464">
    <property type="entry name" value="METHYLTRANSFERASE"/>
    <property type="match status" value="1"/>
</dbReference>
<dbReference type="PANTHER" id="PTHR43464:SF19">
    <property type="entry name" value="UBIQUINONE BIOSYNTHESIS O-METHYLTRANSFERASE, MITOCHONDRIAL"/>
    <property type="match status" value="1"/>
</dbReference>
<dbReference type="Pfam" id="PF13489">
    <property type="entry name" value="Methyltransf_23"/>
    <property type="match status" value="1"/>
</dbReference>
<dbReference type="SUPFAM" id="SSF53335">
    <property type="entry name" value="S-adenosyl-L-methionine-dependent methyltransferases"/>
    <property type="match status" value="1"/>
</dbReference>
<evidence type="ECO:0000255" key="1">
    <source>
        <dbReference type="HAMAP-Rule" id="MF_00472"/>
    </source>
</evidence>
<comment type="function">
    <text evidence="1">O-methyltransferase that catalyzes the 2 O-methylation steps in the ubiquinone biosynthetic pathway.</text>
</comment>
<comment type="catalytic activity">
    <reaction evidence="1">
        <text>a 3-demethylubiquinol + S-adenosyl-L-methionine = a ubiquinol + S-adenosyl-L-homocysteine + H(+)</text>
        <dbReference type="Rhea" id="RHEA:44380"/>
        <dbReference type="Rhea" id="RHEA-COMP:9566"/>
        <dbReference type="Rhea" id="RHEA-COMP:10914"/>
        <dbReference type="ChEBI" id="CHEBI:15378"/>
        <dbReference type="ChEBI" id="CHEBI:17976"/>
        <dbReference type="ChEBI" id="CHEBI:57856"/>
        <dbReference type="ChEBI" id="CHEBI:59789"/>
        <dbReference type="ChEBI" id="CHEBI:84422"/>
        <dbReference type="EC" id="2.1.1.64"/>
    </reaction>
</comment>
<comment type="catalytic activity">
    <reaction evidence="1">
        <text>a 3-(all-trans-polyprenyl)benzene-1,2-diol + S-adenosyl-L-methionine = a 2-methoxy-6-(all-trans-polyprenyl)phenol + S-adenosyl-L-homocysteine + H(+)</text>
        <dbReference type="Rhea" id="RHEA:31411"/>
        <dbReference type="Rhea" id="RHEA-COMP:9550"/>
        <dbReference type="Rhea" id="RHEA-COMP:9551"/>
        <dbReference type="ChEBI" id="CHEBI:15378"/>
        <dbReference type="ChEBI" id="CHEBI:57856"/>
        <dbReference type="ChEBI" id="CHEBI:59789"/>
        <dbReference type="ChEBI" id="CHEBI:62729"/>
        <dbReference type="ChEBI" id="CHEBI:62731"/>
        <dbReference type="EC" id="2.1.1.222"/>
    </reaction>
</comment>
<comment type="pathway">
    <text evidence="1">Cofactor biosynthesis; ubiquinone biosynthesis.</text>
</comment>
<comment type="similarity">
    <text evidence="1">Belongs to the methyltransferase superfamily. UbiG/COQ3 family.</text>
</comment>
<organism>
    <name type="scientific">Escherichia coli O81 (strain ED1a)</name>
    <dbReference type="NCBI Taxonomy" id="585397"/>
    <lineage>
        <taxon>Bacteria</taxon>
        <taxon>Pseudomonadati</taxon>
        <taxon>Pseudomonadota</taxon>
        <taxon>Gammaproteobacteria</taxon>
        <taxon>Enterobacterales</taxon>
        <taxon>Enterobacteriaceae</taxon>
        <taxon>Escherichia</taxon>
    </lineage>
</organism>
<reference key="1">
    <citation type="journal article" date="2009" name="PLoS Genet.">
        <title>Organised genome dynamics in the Escherichia coli species results in highly diverse adaptive paths.</title>
        <authorList>
            <person name="Touchon M."/>
            <person name="Hoede C."/>
            <person name="Tenaillon O."/>
            <person name="Barbe V."/>
            <person name="Baeriswyl S."/>
            <person name="Bidet P."/>
            <person name="Bingen E."/>
            <person name="Bonacorsi S."/>
            <person name="Bouchier C."/>
            <person name="Bouvet O."/>
            <person name="Calteau A."/>
            <person name="Chiapello H."/>
            <person name="Clermont O."/>
            <person name="Cruveiller S."/>
            <person name="Danchin A."/>
            <person name="Diard M."/>
            <person name="Dossat C."/>
            <person name="Karoui M.E."/>
            <person name="Frapy E."/>
            <person name="Garry L."/>
            <person name="Ghigo J.M."/>
            <person name="Gilles A.M."/>
            <person name="Johnson J."/>
            <person name="Le Bouguenec C."/>
            <person name="Lescat M."/>
            <person name="Mangenot S."/>
            <person name="Martinez-Jehanne V."/>
            <person name="Matic I."/>
            <person name="Nassif X."/>
            <person name="Oztas S."/>
            <person name="Petit M.A."/>
            <person name="Pichon C."/>
            <person name="Rouy Z."/>
            <person name="Ruf C.S."/>
            <person name="Schneider D."/>
            <person name="Tourret J."/>
            <person name="Vacherie B."/>
            <person name="Vallenet D."/>
            <person name="Medigue C."/>
            <person name="Rocha E.P.C."/>
            <person name="Denamur E."/>
        </authorList>
    </citation>
    <scope>NUCLEOTIDE SEQUENCE [LARGE SCALE GENOMIC DNA]</scope>
    <source>
        <strain>ED1a</strain>
    </source>
</reference>
<proteinExistence type="inferred from homology"/>
<feature type="chain" id="PRO_1000135504" description="Ubiquinone biosynthesis O-methyltransferase">
    <location>
        <begin position="1"/>
        <end position="240"/>
    </location>
</feature>
<feature type="binding site" evidence="1">
    <location>
        <position position="44"/>
    </location>
    <ligand>
        <name>S-adenosyl-L-methionine</name>
        <dbReference type="ChEBI" id="CHEBI:59789"/>
    </ligand>
</feature>
<feature type="binding site" evidence="1">
    <location>
        <position position="64"/>
    </location>
    <ligand>
        <name>S-adenosyl-L-methionine</name>
        <dbReference type="ChEBI" id="CHEBI:59789"/>
    </ligand>
</feature>
<feature type="binding site" evidence="1">
    <location>
        <position position="85"/>
    </location>
    <ligand>
        <name>S-adenosyl-L-methionine</name>
        <dbReference type="ChEBI" id="CHEBI:59789"/>
    </ligand>
</feature>
<feature type="binding site" evidence="1">
    <location>
        <position position="129"/>
    </location>
    <ligand>
        <name>S-adenosyl-L-methionine</name>
        <dbReference type="ChEBI" id="CHEBI:59789"/>
    </ligand>
</feature>
<protein>
    <recommendedName>
        <fullName evidence="1">Ubiquinone biosynthesis O-methyltransferase</fullName>
    </recommendedName>
    <alternativeName>
        <fullName evidence="1">2-octaprenyl-6-hydroxyphenol methylase</fullName>
        <ecNumber evidence="1">2.1.1.222</ecNumber>
    </alternativeName>
    <alternativeName>
        <fullName evidence="1">3-demethylubiquinone-8 3-O-methyltransferase</fullName>
        <ecNumber evidence="1">2.1.1.64</ecNumber>
    </alternativeName>
</protein>
<sequence>MNAEKSPVNHNVDHKEIAKFEAVASRWWDLEGEFKPLHRINPLRLGYIAERAGGLFGKKVLDVGCGGGILAESMAREGATVTGLDMGFEPLQVAKLHALESGIQVDYVQETVEEHAAKHAGQYDVVTCMEMLEHVPDPQSVVRACAQLVKPGGDVFFSTLNRNGKSWLMAVVGAEYILRMVPKGTHDVKKFIKPAELLGWVDQTSLKERHMTGLHYNPITNSFKLGPGVDVNYMLHTQNK</sequence>